<feature type="chain" id="PRO_0000263043" description="Uncharacterized protein YubA">
    <location>
        <begin position="1"/>
        <end position="168"/>
    </location>
</feature>
<sequence length="168" mass="19067">MPNWCSNRMYFSGEPAQIAEIKRLASGAVTPLYRRATNEGIQLFLAGSAGLLQTTEDVRFEPCPGLTAAGRGVVSPENIAFTRWLTHLQDGVLLDEQNCLMLHELWLQSGTGRRRWEELPDDARESITALFTPKRGDWCDIWSNEDVSVWWNRLCDNVLPEKPCRLTC</sequence>
<organism>
    <name type="scientific">Escherichia coli (strain K12)</name>
    <dbReference type="NCBI Taxonomy" id="83333"/>
    <lineage>
        <taxon>Bacteria</taxon>
        <taxon>Pseudomonadati</taxon>
        <taxon>Pseudomonadota</taxon>
        <taxon>Gammaproteobacteria</taxon>
        <taxon>Enterobacterales</taxon>
        <taxon>Enterobacteriaceae</taxon>
        <taxon>Escherichia</taxon>
    </lineage>
</organism>
<gene>
    <name type="primary">yubA</name>
    <name type="synonym">yfcB</name>
    <name type="ordered locus">ECOK12F049</name>
</gene>
<geneLocation type="plasmid">
    <name>F</name>
</geneLocation>
<accession>Q9S4X5</accession>
<accession>Q7AJQ8</accession>
<dbReference type="EMBL" id="AF106329">
    <property type="protein sequence ID" value="AAD47175.1"/>
    <property type="molecule type" value="Genomic_DNA"/>
</dbReference>
<dbReference type="EMBL" id="AP001918">
    <property type="protein sequence ID" value="BAA97919.1"/>
    <property type="molecule type" value="Genomic_DNA"/>
</dbReference>
<dbReference type="RefSeq" id="NP_061428.1">
    <property type="nucleotide sequence ID" value="NC_002483.1"/>
</dbReference>
<dbReference type="SMR" id="Q9S4X5"/>
<dbReference type="Gene3D" id="1.10.3530.10">
    <property type="entry name" value="Api92-like"/>
    <property type="match status" value="1"/>
</dbReference>
<dbReference type="InterPro" id="IPR023136">
    <property type="entry name" value="Api92-like_dom_sf"/>
</dbReference>
<dbReference type="InterPro" id="IPR009694">
    <property type="entry name" value="DUF1281"/>
</dbReference>
<dbReference type="Pfam" id="PF06924">
    <property type="entry name" value="DUF1281"/>
    <property type="match status" value="1"/>
</dbReference>
<dbReference type="SUPFAM" id="SSF160940">
    <property type="entry name" value="Api92-like"/>
    <property type="match status" value="1"/>
</dbReference>
<proteinExistence type="predicted"/>
<keyword id="KW-0614">Plasmid</keyword>
<reference key="1">
    <citation type="journal article" date="1999" name="Plasmid">
        <title>Nucleotide sequence of the F plasmid leading region.</title>
        <authorList>
            <person name="Manwaring N.P."/>
            <person name="Skurray R.A."/>
            <person name="Firth N."/>
        </authorList>
    </citation>
    <scope>NUCLEOTIDE SEQUENCE [GENOMIC DNA]</scope>
</reference>
<reference key="2">
    <citation type="submission" date="2000-04" db="EMBL/GenBank/DDBJ databases">
        <title>Complete nucleotide sequence of the F plasmid: its implications for organization and diversification of plasmid genomes.</title>
        <authorList>
            <person name="Shimizu H."/>
            <person name="Saitoh Y."/>
            <person name="Suda Y."/>
            <person name="Uehara K."/>
            <person name="Sampei G."/>
            <person name="Mizobuchi K."/>
        </authorList>
    </citation>
    <scope>NUCLEOTIDE SEQUENCE [LARGE SCALE GENOMIC DNA]</scope>
    <source>
        <strain>K12 / CR63</strain>
    </source>
</reference>
<protein>
    <recommendedName>
        <fullName>Uncharacterized protein YubA</fullName>
    </recommendedName>
</protein>
<name>YUBA_ECOLI</name>